<feature type="chain" id="PRO_1000082695" description="UDP-N-acetylmuramoylalanine--D-glutamate ligase">
    <location>
        <begin position="1"/>
        <end position="450"/>
    </location>
</feature>
<feature type="binding site" evidence="1">
    <location>
        <begin position="119"/>
        <end position="125"/>
    </location>
    <ligand>
        <name>ATP</name>
        <dbReference type="ChEBI" id="CHEBI:30616"/>
    </ligand>
</feature>
<sequence length="450" mass="48230">MKNIASFANKKVLVLGLAKSGESAARLLDKLGAIVTVNDGKPFEENPAAQSLLEEGIKVVTGGHPLELLDENFELMVKNPGIPYNNAMVIRALEKKIPVITEVELAYLISEAPIIGITGSNGKTTTTTMIAQVLTAGGQNGLLSGNIGFPASQVAQSACGKDTLVMELSSFQLMGIEAFHPQIAVITNLMPTHLDYHGSFEEYAAAKWNIQKNMTADDYLVLNFNQDWAKGMASQTQATVVPFSTTEKVDGAYLDGDVLTFRGEAIIKVAEIGVPGSHNVENALATIAVAKLRGIDNQTIKEVLSAFGGVKHRLQYVGQVNEVAFYNDSKSTNILATQKALSGFDNSKVILIAGGLDRGNEFDELVPDLKGLKKMVILGQSAPRVKRAADQAGVSYLDATDVRDAAHKAFALAEPGDIVLLSPANASWDMYSNFEVRGDEFLVAFEELKG</sequence>
<protein>
    <recommendedName>
        <fullName evidence="1">UDP-N-acetylmuramoylalanine--D-glutamate ligase</fullName>
        <ecNumber evidence="1">6.3.2.9</ecNumber>
    </recommendedName>
    <alternativeName>
        <fullName evidence="1">D-glutamic acid-adding enzyme</fullName>
    </alternativeName>
    <alternativeName>
        <fullName evidence="1">UDP-N-acetylmuramoyl-L-alanyl-D-glutamate synthetase</fullName>
    </alternativeName>
</protein>
<proteinExistence type="inferred from homology"/>
<accession>A8AW14</accession>
<name>MURD_STRGC</name>
<comment type="function">
    <text evidence="1">Cell wall formation. Catalyzes the addition of glutamate to the nucleotide precursor UDP-N-acetylmuramoyl-L-alanine (UMA).</text>
</comment>
<comment type="catalytic activity">
    <reaction evidence="1">
        <text>UDP-N-acetyl-alpha-D-muramoyl-L-alanine + D-glutamate + ATP = UDP-N-acetyl-alpha-D-muramoyl-L-alanyl-D-glutamate + ADP + phosphate + H(+)</text>
        <dbReference type="Rhea" id="RHEA:16429"/>
        <dbReference type="ChEBI" id="CHEBI:15378"/>
        <dbReference type="ChEBI" id="CHEBI:29986"/>
        <dbReference type="ChEBI" id="CHEBI:30616"/>
        <dbReference type="ChEBI" id="CHEBI:43474"/>
        <dbReference type="ChEBI" id="CHEBI:83898"/>
        <dbReference type="ChEBI" id="CHEBI:83900"/>
        <dbReference type="ChEBI" id="CHEBI:456216"/>
        <dbReference type="EC" id="6.3.2.9"/>
    </reaction>
</comment>
<comment type="pathway">
    <text evidence="1">Cell wall biogenesis; peptidoglycan biosynthesis.</text>
</comment>
<comment type="subcellular location">
    <subcellularLocation>
        <location evidence="1">Cytoplasm</location>
    </subcellularLocation>
</comment>
<comment type="similarity">
    <text evidence="1">Belongs to the MurCDEF family.</text>
</comment>
<evidence type="ECO:0000255" key="1">
    <source>
        <dbReference type="HAMAP-Rule" id="MF_00639"/>
    </source>
</evidence>
<organism>
    <name type="scientific">Streptococcus gordonii (strain Challis / ATCC 35105 / BCRC 15272 / CH1 / DL1 / V288)</name>
    <dbReference type="NCBI Taxonomy" id="467705"/>
    <lineage>
        <taxon>Bacteria</taxon>
        <taxon>Bacillati</taxon>
        <taxon>Bacillota</taxon>
        <taxon>Bacilli</taxon>
        <taxon>Lactobacillales</taxon>
        <taxon>Streptococcaceae</taxon>
        <taxon>Streptococcus</taxon>
    </lineage>
</organism>
<dbReference type="EC" id="6.3.2.9" evidence="1"/>
<dbReference type="EMBL" id="CP000725">
    <property type="protein sequence ID" value="ABV10570.1"/>
    <property type="molecule type" value="Genomic_DNA"/>
</dbReference>
<dbReference type="RefSeq" id="WP_012000146.1">
    <property type="nucleotide sequence ID" value="NC_009785.1"/>
</dbReference>
<dbReference type="SMR" id="A8AW14"/>
<dbReference type="STRING" id="467705.SGO_0671"/>
<dbReference type="KEGG" id="sgo:SGO_0671"/>
<dbReference type="eggNOG" id="COG0771">
    <property type="taxonomic scope" value="Bacteria"/>
</dbReference>
<dbReference type="HOGENOM" id="CLU_032540_0_1_9"/>
<dbReference type="UniPathway" id="UPA00219"/>
<dbReference type="Proteomes" id="UP000001131">
    <property type="component" value="Chromosome"/>
</dbReference>
<dbReference type="GO" id="GO:0005737">
    <property type="term" value="C:cytoplasm"/>
    <property type="evidence" value="ECO:0007669"/>
    <property type="project" value="UniProtKB-SubCell"/>
</dbReference>
<dbReference type="GO" id="GO:0005524">
    <property type="term" value="F:ATP binding"/>
    <property type="evidence" value="ECO:0007669"/>
    <property type="project" value="UniProtKB-UniRule"/>
</dbReference>
<dbReference type="GO" id="GO:0008764">
    <property type="term" value="F:UDP-N-acetylmuramoylalanine-D-glutamate ligase activity"/>
    <property type="evidence" value="ECO:0007669"/>
    <property type="project" value="UniProtKB-UniRule"/>
</dbReference>
<dbReference type="GO" id="GO:0051301">
    <property type="term" value="P:cell division"/>
    <property type="evidence" value="ECO:0007669"/>
    <property type="project" value="UniProtKB-KW"/>
</dbReference>
<dbReference type="GO" id="GO:0071555">
    <property type="term" value="P:cell wall organization"/>
    <property type="evidence" value="ECO:0007669"/>
    <property type="project" value="UniProtKB-KW"/>
</dbReference>
<dbReference type="GO" id="GO:0009252">
    <property type="term" value="P:peptidoglycan biosynthetic process"/>
    <property type="evidence" value="ECO:0007669"/>
    <property type="project" value="UniProtKB-UniRule"/>
</dbReference>
<dbReference type="GO" id="GO:0008360">
    <property type="term" value="P:regulation of cell shape"/>
    <property type="evidence" value="ECO:0007669"/>
    <property type="project" value="UniProtKB-KW"/>
</dbReference>
<dbReference type="Gene3D" id="3.90.190.20">
    <property type="entry name" value="Mur ligase, C-terminal domain"/>
    <property type="match status" value="1"/>
</dbReference>
<dbReference type="Gene3D" id="3.40.1190.10">
    <property type="entry name" value="Mur-like, catalytic domain"/>
    <property type="match status" value="1"/>
</dbReference>
<dbReference type="Gene3D" id="3.40.50.720">
    <property type="entry name" value="NAD(P)-binding Rossmann-like Domain"/>
    <property type="match status" value="1"/>
</dbReference>
<dbReference type="HAMAP" id="MF_00639">
    <property type="entry name" value="MurD"/>
    <property type="match status" value="1"/>
</dbReference>
<dbReference type="InterPro" id="IPR036565">
    <property type="entry name" value="Mur-like_cat_sf"/>
</dbReference>
<dbReference type="InterPro" id="IPR004101">
    <property type="entry name" value="Mur_ligase_C"/>
</dbReference>
<dbReference type="InterPro" id="IPR036615">
    <property type="entry name" value="Mur_ligase_C_dom_sf"/>
</dbReference>
<dbReference type="InterPro" id="IPR013221">
    <property type="entry name" value="Mur_ligase_cen"/>
</dbReference>
<dbReference type="InterPro" id="IPR005762">
    <property type="entry name" value="MurD"/>
</dbReference>
<dbReference type="NCBIfam" id="TIGR01087">
    <property type="entry name" value="murD"/>
    <property type="match status" value="1"/>
</dbReference>
<dbReference type="PANTHER" id="PTHR43692">
    <property type="entry name" value="UDP-N-ACETYLMURAMOYLALANINE--D-GLUTAMATE LIGASE"/>
    <property type="match status" value="1"/>
</dbReference>
<dbReference type="PANTHER" id="PTHR43692:SF1">
    <property type="entry name" value="UDP-N-ACETYLMURAMOYLALANINE--D-GLUTAMATE LIGASE"/>
    <property type="match status" value="1"/>
</dbReference>
<dbReference type="Pfam" id="PF02875">
    <property type="entry name" value="Mur_ligase_C"/>
    <property type="match status" value="1"/>
</dbReference>
<dbReference type="Pfam" id="PF08245">
    <property type="entry name" value="Mur_ligase_M"/>
    <property type="match status" value="1"/>
</dbReference>
<dbReference type="Pfam" id="PF21799">
    <property type="entry name" value="MurD-like_N"/>
    <property type="match status" value="1"/>
</dbReference>
<dbReference type="SUPFAM" id="SSF51984">
    <property type="entry name" value="MurCD N-terminal domain"/>
    <property type="match status" value="1"/>
</dbReference>
<dbReference type="SUPFAM" id="SSF53623">
    <property type="entry name" value="MurD-like peptide ligases, catalytic domain"/>
    <property type="match status" value="1"/>
</dbReference>
<dbReference type="SUPFAM" id="SSF53244">
    <property type="entry name" value="MurD-like peptide ligases, peptide-binding domain"/>
    <property type="match status" value="1"/>
</dbReference>
<gene>
    <name evidence="1" type="primary">murD</name>
    <name type="ordered locus">SGO_0671</name>
</gene>
<keyword id="KW-0067">ATP-binding</keyword>
<keyword id="KW-0131">Cell cycle</keyword>
<keyword id="KW-0132">Cell division</keyword>
<keyword id="KW-0133">Cell shape</keyword>
<keyword id="KW-0961">Cell wall biogenesis/degradation</keyword>
<keyword id="KW-0963">Cytoplasm</keyword>
<keyword id="KW-0436">Ligase</keyword>
<keyword id="KW-0547">Nucleotide-binding</keyword>
<keyword id="KW-0573">Peptidoglycan synthesis</keyword>
<keyword id="KW-1185">Reference proteome</keyword>
<reference key="1">
    <citation type="journal article" date="2007" name="J. Bacteriol.">
        <title>Genome-wide transcriptional changes in Streptococcus gordonii in response to competence signaling peptide.</title>
        <authorList>
            <person name="Vickerman M.M."/>
            <person name="Iobst S."/>
            <person name="Jesionowski A.M."/>
            <person name="Gill S.R."/>
        </authorList>
    </citation>
    <scope>NUCLEOTIDE SEQUENCE [LARGE SCALE GENOMIC DNA]</scope>
    <source>
        <strain>Challis / ATCC 35105 / BCRC 15272 / CH1 / DL1 / V288</strain>
    </source>
</reference>